<evidence type="ECO:0000255" key="1">
    <source>
        <dbReference type="HAMAP-Rule" id="MF_01371"/>
    </source>
</evidence>
<evidence type="ECO:0000305" key="2"/>
<protein>
    <recommendedName>
        <fullName evidence="1">Large ribosomal subunit protein uL30</fullName>
    </recommendedName>
    <alternativeName>
        <fullName evidence="2">50S ribosomal protein L30</fullName>
    </alternativeName>
</protein>
<accession>Q1J8Z5</accession>
<dbReference type="EMBL" id="CP000262">
    <property type="protein sequence ID" value="ABF37016.1"/>
    <property type="molecule type" value="Genomic_DNA"/>
</dbReference>
<dbReference type="SMR" id="Q1J8Z5"/>
<dbReference type="KEGG" id="spi:MGAS10750_Spy0066"/>
<dbReference type="HOGENOM" id="CLU_131047_2_1_9"/>
<dbReference type="Proteomes" id="UP000002434">
    <property type="component" value="Chromosome"/>
</dbReference>
<dbReference type="GO" id="GO:0022625">
    <property type="term" value="C:cytosolic large ribosomal subunit"/>
    <property type="evidence" value="ECO:0007669"/>
    <property type="project" value="TreeGrafter"/>
</dbReference>
<dbReference type="GO" id="GO:0003735">
    <property type="term" value="F:structural constituent of ribosome"/>
    <property type="evidence" value="ECO:0007669"/>
    <property type="project" value="InterPro"/>
</dbReference>
<dbReference type="GO" id="GO:0006412">
    <property type="term" value="P:translation"/>
    <property type="evidence" value="ECO:0007669"/>
    <property type="project" value="UniProtKB-UniRule"/>
</dbReference>
<dbReference type="CDD" id="cd01658">
    <property type="entry name" value="Ribosomal_L30"/>
    <property type="match status" value="1"/>
</dbReference>
<dbReference type="FunFam" id="3.30.1390.20:FF:000001">
    <property type="entry name" value="50S ribosomal protein L30"/>
    <property type="match status" value="1"/>
</dbReference>
<dbReference type="Gene3D" id="3.30.1390.20">
    <property type="entry name" value="Ribosomal protein L30, ferredoxin-like fold domain"/>
    <property type="match status" value="1"/>
</dbReference>
<dbReference type="HAMAP" id="MF_01371_B">
    <property type="entry name" value="Ribosomal_uL30_B"/>
    <property type="match status" value="1"/>
</dbReference>
<dbReference type="InterPro" id="IPR036919">
    <property type="entry name" value="Ribo_uL30_ferredoxin-like_sf"/>
</dbReference>
<dbReference type="InterPro" id="IPR005996">
    <property type="entry name" value="Ribosomal_uL30_bac-type"/>
</dbReference>
<dbReference type="InterPro" id="IPR018038">
    <property type="entry name" value="Ribosomal_uL30_CS"/>
</dbReference>
<dbReference type="InterPro" id="IPR016082">
    <property type="entry name" value="Ribosomal_uL30_ferredoxin-like"/>
</dbReference>
<dbReference type="NCBIfam" id="TIGR01308">
    <property type="entry name" value="rpmD_bact"/>
    <property type="match status" value="1"/>
</dbReference>
<dbReference type="PANTHER" id="PTHR15892:SF2">
    <property type="entry name" value="LARGE RIBOSOMAL SUBUNIT PROTEIN UL30M"/>
    <property type="match status" value="1"/>
</dbReference>
<dbReference type="PANTHER" id="PTHR15892">
    <property type="entry name" value="MITOCHONDRIAL RIBOSOMAL PROTEIN L30"/>
    <property type="match status" value="1"/>
</dbReference>
<dbReference type="Pfam" id="PF00327">
    <property type="entry name" value="Ribosomal_L30"/>
    <property type="match status" value="1"/>
</dbReference>
<dbReference type="PIRSF" id="PIRSF002211">
    <property type="entry name" value="Ribosomal_L30_bac-type"/>
    <property type="match status" value="1"/>
</dbReference>
<dbReference type="SUPFAM" id="SSF55129">
    <property type="entry name" value="Ribosomal protein L30p/L7e"/>
    <property type="match status" value="1"/>
</dbReference>
<dbReference type="PROSITE" id="PS00634">
    <property type="entry name" value="RIBOSOMAL_L30"/>
    <property type="match status" value="1"/>
</dbReference>
<comment type="subunit">
    <text evidence="1">Part of the 50S ribosomal subunit.</text>
</comment>
<comment type="similarity">
    <text evidence="1">Belongs to the universal ribosomal protein uL30 family.</text>
</comment>
<feature type="chain" id="PRO_0000273875" description="Large ribosomal subunit protein uL30">
    <location>
        <begin position="1"/>
        <end position="60"/>
    </location>
</feature>
<gene>
    <name evidence="1" type="primary">rpmD</name>
    <name type="ordered locus">MGAS10750_Spy0066</name>
</gene>
<reference key="1">
    <citation type="journal article" date="2006" name="Proc. Natl. Acad. Sci. U.S.A.">
        <title>Molecular genetic anatomy of inter- and intraserotype variation in the human bacterial pathogen group A Streptococcus.</title>
        <authorList>
            <person name="Beres S.B."/>
            <person name="Richter E.W."/>
            <person name="Nagiec M.J."/>
            <person name="Sumby P."/>
            <person name="Porcella S.F."/>
            <person name="DeLeo F.R."/>
            <person name="Musser J.M."/>
        </authorList>
    </citation>
    <scope>NUCLEOTIDE SEQUENCE [LARGE SCALE GENOMIC DNA]</scope>
    <source>
        <strain>MGAS10750</strain>
    </source>
</reference>
<keyword id="KW-0687">Ribonucleoprotein</keyword>
<keyword id="KW-0689">Ribosomal protein</keyword>
<name>RL30_STRPF</name>
<sequence>MAQIKITLTKSPIGRKPEQRKTVVALGLGKLNSSVVKEDNAAIRGMVTAISHLVTVEDVK</sequence>
<organism>
    <name type="scientific">Streptococcus pyogenes serotype M4 (strain MGAS10750)</name>
    <dbReference type="NCBI Taxonomy" id="370554"/>
    <lineage>
        <taxon>Bacteria</taxon>
        <taxon>Bacillati</taxon>
        <taxon>Bacillota</taxon>
        <taxon>Bacilli</taxon>
        <taxon>Lactobacillales</taxon>
        <taxon>Streptococcaceae</taxon>
        <taxon>Streptococcus</taxon>
    </lineage>
</organism>
<proteinExistence type="inferred from homology"/>